<reference key="1">
    <citation type="journal article" date="2007" name="Genome Res.">
        <title>Genome sequence of a proteolytic (Group I) Clostridium botulinum strain Hall A and comparative analysis of the clostridial genomes.</title>
        <authorList>
            <person name="Sebaihia M."/>
            <person name="Peck M.W."/>
            <person name="Minton N.P."/>
            <person name="Thomson N.R."/>
            <person name="Holden M.T.G."/>
            <person name="Mitchell W.J."/>
            <person name="Carter A.T."/>
            <person name="Bentley S.D."/>
            <person name="Mason D.R."/>
            <person name="Crossman L."/>
            <person name="Paul C.J."/>
            <person name="Ivens A."/>
            <person name="Wells-Bennik M.H.J."/>
            <person name="Davis I.J."/>
            <person name="Cerdeno-Tarraga A.M."/>
            <person name="Churcher C."/>
            <person name="Quail M.A."/>
            <person name="Chillingworth T."/>
            <person name="Feltwell T."/>
            <person name="Fraser A."/>
            <person name="Goodhead I."/>
            <person name="Hance Z."/>
            <person name="Jagels K."/>
            <person name="Larke N."/>
            <person name="Maddison M."/>
            <person name="Moule S."/>
            <person name="Mungall K."/>
            <person name="Norbertczak H."/>
            <person name="Rabbinowitsch E."/>
            <person name="Sanders M."/>
            <person name="Simmonds M."/>
            <person name="White B."/>
            <person name="Whithead S."/>
            <person name="Parkhill J."/>
        </authorList>
    </citation>
    <scope>NUCLEOTIDE SEQUENCE [LARGE SCALE GENOMIC DNA]</scope>
    <source>
        <strain>Hall / ATCC 3502 / NCTC 13319 / Type A</strain>
    </source>
</reference>
<reference key="2">
    <citation type="journal article" date="2007" name="PLoS ONE">
        <title>Analysis of the neurotoxin complex genes in Clostridium botulinum A1-A4 and B1 strains: BoNT/A3, /Ba4 and /B1 clusters are located within plasmids.</title>
        <authorList>
            <person name="Smith T.J."/>
            <person name="Hill K.K."/>
            <person name="Foley B.T."/>
            <person name="Detter J.C."/>
            <person name="Munk A.C."/>
            <person name="Bruce D.C."/>
            <person name="Doggett N.A."/>
            <person name="Smith L.A."/>
            <person name="Marks J.D."/>
            <person name="Xie G."/>
            <person name="Brettin T.S."/>
        </authorList>
    </citation>
    <scope>NUCLEOTIDE SEQUENCE [LARGE SCALE GENOMIC DNA]</scope>
    <source>
        <strain>Hall / ATCC 3502 / NCTC 13319 / Type A</strain>
    </source>
</reference>
<keyword id="KW-1185">Reference proteome</keyword>
<keyword id="KW-0687">Ribonucleoprotein</keyword>
<keyword id="KW-0689">Ribosomal protein</keyword>
<keyword id="KW-0694">RNA-binding</keyword>
<keyword id="KW-0699">rRNA-binding</keyword>
<gene>
    <name evidence="1" type="primary">rpsF</name>
    <name type="ordered locus">CBO3628</name>
    <name type="ordered locus">CLC_3627</name>
</gene>
<feature type="chain" id="PRO_1000005248" description="Small ribosomal subunit protein bS6">
    <location>
        <begin position="1"/>
        <end position="94"/>
    </location>
</feature>
<accession>A5I801</accession>
<accession>A7G984</accession>
<evidence type="ECO:0000255" key="1">
    <source>
        <dbReference type="HAMAP-Rule" id="MF_00360"/>
    </source>
</evidence>
<evidence type="ECO:0000305" key="2"/>
<protein>
    <recommendedName>
        <fullName evidence="1">Small ribosomal subunit protein bS6</fullName>
    </recommendedName>
    <alternativeName>
        <fullName evidence="2">30S ribosomal protein S6</fullName>
    </alternativeName>
</protein>
<organism>
    <name type="scientific">Clostridium botulinum (strain Hall / ATCC 3502 / NCTC 13319 / Type A)</name>
    <dbReference type="NCBI Taxonomy" id="441771"/>
    <lineage>
        <taxon>Bacteria</taxon>
        <taxon>Bacillati</taxon>
        <taxon>Bacillota</taxon>
        <taxon>Clostridia</taxon>
        <taxon>Eubacteriales</taxon>
        <taxon>Clostridiaceae</taxon>
        <taxon>Clostridium</taxon>
    </lineage>
</organism>
<proteinExistence type="inferred from homology"/>
<name>RS6_CLOBH</name>
<comment type="function">
    <text evidence="1">Binds together with bS18 to 16S ribosomal RNA.</text>
</comment>
<comment type="similarity">
    <text evidence="1">Belongs to the bacterial ribosomal protein bS6 family.</text>
</comment>
<dbReference type="EMBL" id="CP000727">
    <property type="protein sequence ID" value="ABS36396.1"/>
    <property type="molecule type" value="Genomic_DNA"/>
</dbReference>
<dbReference type="EMBL" id="AM412317">
    <property type="protein sequence ID" value="CAL85186.1"/>
    <property type="molecule type" value="Genomic_DNA"/>
</dbReference>
<dbReference type="RefSeq" id="WP_012048444.1">
    <property type="nucleotide sequence ID" value="NC_009698.1"/>
</dbReference>
<dbReference type="RefSeq" id="YP_001256106.1">
    <property type="nucleotide sequence ID" value="NC_009495.1"/>
</dbReference>
<dbReference type="RefSeq" id="YP_001389349.1">
    <property type="nucleotide sequence ID" value="NC_009698.1"/>
</dbReference>
<dbReference type="SMR" id="A5I801"/>
<dbReference type="GeneID" id="5187884"/>
<dbReference type="KEGG" id="cbh:CLC_3627"/>
<dbReference type="KEGG" id="cbo:CBO3628"/>
<dbReference type="PATRIC" id="fig|413999.7.peg.3604"/>
<dbReference type="HOGENOM" id="CLU_113441_5_1_9"/>
<dbReference type="PRO" id="PR:A5I801"/>
<dbReference type="Proteomes" id="UP000001986">
    <property type="component" value="Chromosome"/>
</dbReference>
<dbReference type="GO" id="GO:0005737">
    <property type="term" value="C:cytoplasm"/>
    <property type="evidence" value="ECO:0007669"/>
    <property type="project" value="UniProtKB-ARBA"/>
</dbReference>
<dbReference type="GO" id="GO:1990904">
    <property type="term" value="C:ribonucleoprotein complex"/>
    <property type="evidence" value="ECO:0007669"/>
    <property type="project" value="UniProtKB-KW"/>
</dbReference>
<dbReference type="GO" id="GO:0005840">
    <property type="term" value="C:ribosome"/>
    <property type="evidence" value="ECO:0007669"/>
    <property type="project" value="UniProtKB-KW"/>
</dbReference>
<dbReference type="GO" id="GO:0070181">
    <property type="term" value="F:small ribosomal subunit rRNA binding"/>
    <property type="evidence" value="ECO:0000318"/>
    <property type="project" value="GO_Central"/>
</dbReference>
<dbReference type="GO" id="GO:0003735">
    <property type="term" value="F:structural constituent of ribosome"/>
    <property type="evidence" value="ECO:0000318"/>
    <property type="project" value="GO_Central"/>
</dbReference>
<dbReference type="GO" id="GO:0006412">
    <property type="term" value="P:translation"/>
    <property type="evidence" value="ECO:0007669"/>
    <property type="project" value="UniProtKB-UniRule"/>
</dbReference>
<dbReference type="CDD" id="cd00473">
    <property type="entry name" value="bS6"/>
    <property type="match status" value="1"/>
</dbReference>
<dbReference type="FunFam" id="3.30.70.60:FF:000002">
    <property type="entry name" value="30S ribosomal protein S6"/>
    <property type="match status" value="1"/>
</dbReference>
<dbReference type="Gene3D" id="3.30.70.60">
    <property type="match status" value="1"/>
</dbReference>
<dbReference type="HAMAP" id="MF_00360">
    <property type="entry name" value="Ribosomal_bS6"/>
    <property type="match status" value="1"/>
</dbReference>
<dbReference type="InterPro" id="IPR000529">
    <property type="entry name" value="Ribosomal_bS6"/>
</dbReference>
<dbReference type="InterPro" id="IPR035980">
    <property type="entry name" value="Ribosomal_bS6_sf"/>
</dbReference>
<dbReference type="InterPro" id="IPR020814">
    <property type="entry name" value="Ribosomal_S6_plastid/chlpt"/>
</dbReference>
<dbReference type="InterPro" id="IPR014717">
    <property type="entry name" value="Transl_elong_EF1B/ribsomal_bS6"/>
</dbReference>
<dbReference type="NCBIfam" id="TIGR00166">
    <property type="entry name" value="S6"/>
    <property type="match status" value="1"/>
</dbReference>
<dbReference type="PANTHER" id="PTHR21011">
    <property type="entry name" value="MITOCHONDRIAL 28S RIBOSOMAL PROTEIN S6"/>
    <property type="match status" value="1"/>
</dbReference>
<dbReference type="PANTHER" id="PTHR21011:SF1">
    <property type="entry name" value="SMALL RIBOSOMAL SUBUNIT PROTEIN BS6M"/>
    <property type="match status" value="1"/>
</dbReference>
<dbReference type="Pfam" id="PF01250">
    <property type="entry name" value="Ribosomal_S6"/>
    <property type="match status" value="1"/>
</dbReference>
<dbReference type="SUPFAM" id="SSF54995">
    <property type="entry name" value="Ribosomal protein S6"/>
    <property type="match status" value="1"/>
</dbReference>
<sequence length="94" mass="10936">MRKYETVFILNPTLDEEGYKANVEKFKGVIENAGGTVDNVDLWGKRKLAYEVKKVSEGYYTLMNFTADTELPKELDRVFRITDTVIRHMIITQE</sequence>